<name>Y1003_STAA9</name>
<gene>
    <name type="ordered locus">SaurJH9_1003</name>
</gene>
<proteinExistence type="inferred from homology"/>
<organism>
    <name type="scientific">Staphylococcus aureus (strain JH9)</name>
    <dbReference type="NCBI Taxonomy" id="359786"/>
    <lineage>
        <taxon>Bacteria</taxon>
        <taxon>Bacillati</taxon>
        <taxon>Bacillota</taxon>
        <taxon>Bacilli</taxon>
        <taxon>Bacillales</taxon>
        <taxon>Staphylococcaceae</taxon>
        <taxon>Staphylococcus</taxon>
    </lineage>
</organism>
<comment type="similarity">
    <text evidence="1">Belongs to the UPF0738 family.</text>
</comment>
<dbReference type="EMBL" id="CP000703">
    <property type="protein sequence ID" value="ABQ48804.1"/>
    <property type="molecule type" value="Genomic_DNA"/>
</dbReference>
<dbReference type="RefSeq" id="WP_001242103.1">
    <property type="nucleotide sequence ID" value="NC_009487.1"/>
</dbReference>
<dbReference type="KEGG" id="saj:SaurJH9_1003"/>
<dbReference type="HOGENOM" id="CLU_142282_0_0_9"/>
<dbReference type="HAMAP" id="MF_01861">
    <property type="entry name" value="UPF0738"/>
    <property type="match status" value="1"/>
</dbReference>
<dbReference type="InterPro" id="IPR020908">
    <property type="entry name" value="UPF0738"/>
</dbReference>
<dbReference type="Pfam" id="PF19785">
    <property type="entry name" value="UPF0738"/>
    <property type="match status" value="1"/>
</dbReference>
<protein>
    <recommendedName>
        <fullName evidence="1">UPF0738 protein SaurJH9_1003</fullName>
    </recommendedName>
</protein>
<feature type="chain" id="PRO_0000369660" description="UPF0738 protein SaurJH9_1003">
    <location>
        <begin position="1"/>
        <end position="115"/>
    </location>
</feature>
<evidence type="ECO:0000255" key="1">
    <source>
        <dbReference type="HAMAP-Rule" id="MF_01861"/>
    </source>
</evidence>
<reference key="1">
    <citation type="submission" date="2007-05" db="EMBL/GenBank/DDBJ databases">
        <title>Complete sequence of chromosome of Staphylococcus aureus subsp. aureus JH9.</title>
        <authorList>
            <consortium name="US DOE Joint Genome Institute"/>
            <person name="Copeland A."/>
            <person name="Lucas S."/>
            <person name="Lapidus A."/>
            <person name="Barry K."/>
            <person name="Detter J.C."/>
            <person name="Glavina del Rio T."/>
            <person name="Hammon N."/>
            <person name="Israni S."/>
            <person name="Pitluck S."/>
            <person name="Chain P."/>
            <person name="Malfatti S."/>
            <person name="Shin M."/>
            <person name="Vergez L."/>
            <person name="Schmutz J."/>
            <person name="Larimer F."/>
            <person name="Land M."/>
            <person name="Hauser L."/>
            <person name="Kyrpides N."/>
            <person name="Kim E."/>
            <person name="Tomasz A."/>
            <person name="Richardson P."/>
        </authorList>
    </citation>
    <scope>NUCLEOTIDE SEQUENCE [LARGE SCALE GENOMIC DNA]</scope>
    <source>
        <strain>JH9</strain>
    </source>
</reference>
<accession>A5IRI1</accession>
<sequence>MRLYINEIKIKDDILYCYTEDSIKGLSEVGQMLVDSDNYAFAYTLDDGKAYAYLIFVQETWTMLHENTTKKIIINDELELTEFHQELTYILDNIKGNNNYGKEFVATVEETFDIE</sequence>